<evidence type="ECO:0000255" key="1">
    <source>
        <dbReference type="HAMAP-Rule" id="MF_01314"/>
    </source>
</evidence>
<keyword id="KW-0067">ATP-binding</keyword>
<keyword id="KW-0238">DNA-binding</keyword>
<keyword id="KW-0547">Nucleotide-binding</keyword>
<keyword id="KW-0597">Phosphoprotein</keyword>
<keyword id="KW-0804">Transcription</keyword>
<keyword id="KW-0805">Transcription regulation</keyword>
<proteinExistence type="inferred from homology"/>
<sequence>MSFSVDVLANIAIELQRGIGHQDRFQRLITTLRQVLECDASALLRYDSRQFIPLAIDGLAKDVLGRRFALEGHPRLEAIARAGDVVRFPADSELPDPYDGLIPGQESLKVHACVGLPLFVGQNLIGALTLDGMQPDQFDVFSDEELRLIAALAAGALSNALLIEQLESQNMLPGDATPFEAVKQTQMIGLSPGMTQLKKEIEIVAASDLNVLISGETGTGKELVAKAIHEASPRAVNPLVYLNCAALPESVAESELFGHVKGAFTGAISNRSGKFEMADNGTLFLDEIGELSLALQAKLLRVLQYGDIQRVGDDRSLRVDVRVLAATNRDLREEVLAGRFRADLFHRLSVFPLSVPPLRERGDDVILLAGYFCEQCRLRQGLSRVVLSAGARNLLQHYSFPGNVRELEHAIHRAVVLARATRNGDEVILEAQHFAFPEVTLPPPEAAAVPVVKQNLREATEAFQRETIRQALAQNHHNWAACARMLETDVANLHRLAKRLGLKD</sequence>
<protein>
    <recommendedName>
        <fullName evidence="1">Anaerobic nitric oxide reductase transcription regulator NorR</fullName>
    </recommendedName>
</protein>
<gene>
    <name evidence="1" type="primary">norR</name>
    <name type="ordered locus">SFV_2796</name>
</gene>
<accession>Q0T1D4</accession>
<reference key="1">
    <citation type="journal article" date="2006" name="BMC Genomics">
        <title>Complete genome sequence of Shigella flexneri 5b and comparison with Shigella flexneri 2a.</title>
        <authorList>
            <person name="Nie H."/>
            <person name="Yang F."/>
            <person name="Zhang X."/>
            <person name="Yang J."/>
            <person name="Chen L."/>
            <person name="Wang J."/>
            <person name="Xiong Z."/>
            <person name="Peng J."/>
            <person name="Sun L."/>
            <person name="Dong J."/>
            <person name="Xue Y."/>
            <person name="Xu X."/>
            <person name="Chen S."/>
            <person name="Yao Z."/>
            <person name="Shen Y."/>
            <person name="Jin Q."/>
        </authorList>
    </citation>
    <scope>NUCLEOTIDE SEQUENCE [LARGE SCALE GENOMIC DNA]</scope>
    <source>
        <strain>8401</strain>
    </source>
</reference>
<organism>
    <name type="scientific">Shigella flexneri serotype 5b (strain 8401)</name>
    <dbReference type="NCBI Taxonomy" id="373384"/>
    <lineage>
        <taxon>Bacteria</taxon>
        <taxon>Pseudomonadati</taxon>
        <taxon>Pseudomonadota</taxon>
        <taxon>Gammaproteobacteria</taxon>
        <taxon>Enterobacterales</taxon>
        <taxon>Enterobacteriaceae</taxon>
        <taxon>Shigella</taxon>
    </lineage>
</organism>
<dbReference type="EMBL" id="CP000266">
    <property type="protein sequence ID" value="ABF04881.1"/>
    <property type="molecule type" value="Genomic_DNA"/>
</dbReference>
<dbReference type="RefSeq" id="WP_000010783.1">
    <property type="nucleotide sequence ID" value="NC_008258.1"/>
</dbReference>
<dbReference type="SMR" id="Q0T1D4"/>
<dbReference type="KEGG" id="sfv:SFV_2796"/>
<dbReference type="HOGENOM" id="CLU_000445_125_0_6"/>
<dbReference type="UniPathway" id="UPA00638"/>
<dbReference type="Proteomes" id="UP000000659">
    <property type="component" value="Chromosome"/>
</dbReference>
<dbReference type="GO" id="GO:0005524">
    <property type="term" value="F:ATP binding"/>
    <property type="evidence" value="ECO:0007669"/>
    <property type="project" value="UniProtKB-UniRule"/>
</dbReference>
<dbReference type="GO" id="GO:0016887">
    <property type="term" value="F:ATP hydrolysis activity"/>
    <property type="evidence" value="ECO:0007669"/>
    <property type="project" value="InterPro"/>
</dbReference>
<dbReference type="GO" id="GO:0003677">
    <property type="term" value="F:DNA binding"/>
    <property type="evidence" value="ECO:0007669"/>
    <property type="project" value="UniProtKB-KW"/>
</dbReference>
<dbReference type="GO" id="GO:0003700">
    <property type="term" value="F:DNA-binding transcription factor activity"/>
    <property type="evidence" value="ECO:0007669"/>
    <property type="project" value="UniProtKB-UniRule"/>
</dbReference>
<dbReference type="GO" id="GO:0000160">
    <property type="term" value="P:phosphorelay signal transduction system"/>
    <property type="evidence" value="ECO:0007669"/>
    <property type="project" value="UniProtKB-UniRule"/>
</dbReference>
<dbReference type="CDD" id="cd00009">
    <property type="entry name" value="AAA"/>
    <property type="match status" value="1"/>
</dbReference>
<dbReference type="FunFam" id="1.10.10.60:FF:000188">
    <property type="entry name" value="Anaerobic nitric oxide reductase transcription regulator NorR"/>
    <property type="match status" value="1"/>
</dbReference>
<dbReference type="FunFam" id="1.10.8.60:FF:000045">
    <property type="entry name" value="Anaerobic nitric oxide reductase transcription regulator NorR"/>
    <property type="match status" value="1"/>
</dbReference>
<dbReference type="FunFam" id="3.30.450.40:FF:000021">
    <property type="entry name" value="Anaerobic nitric oxide reductase transcription regulator NorR"/>
    <property type="match status" value="1"/>
</dbReference>
<dbReference type="FunFam" id="3.40.50.300:FF:000006">
    <property type="entry name" value="DNA-binding transcriptional regulator NtrC"/>
    <property type="match status" value="1"/>
</dbReference>
<dbReference type="Gene3D" id="1.10.8.60">
    <property type="match status" value="1"/>
</dbReference>
<dbReference type="Gene3D" id="3.30.450.40">
    <property type="match status" value="1"/>
</dbReference>
<dbReference type="Gene3D" id="1.10.10.60">
    <property type="entry name" value="Homeodomain-like"/>
    <property type="match status" value="1"/>
</dbReference>
<dbReference type="Gene3D" id="3.40.50.300">
    <property type="entry name" value="P-loop containing nucleotide triphosphate hydrolases"/>
    <property type="match status" value="1"/>
</dbReference>
<dbReference type="HAMAP" id="MF_01314">
    <property type="entry name" value="NorR"/>
    <property type="match status" value="1"/>
</dbReference>
<dbReference type="InterPro" id="IPR003593">
    <property type="entry name" value="AAA+_ATPase"/>
</dbReference>
<dbReference type="InterPro" id="IPR003018">
    <property type="entry name" value="GAF"/>
</dbReference>
<dbReference type="InterPro" id="IPR029016">
    <property type="entry name" value="GAF-like_dom_sf"/>
</dbReference>
<dbReference type="InterPro" id="IPR009057">
    <property type="entry name" value="Homeodomain-like_sf"/>
</dbReference>
<dbReference type="InterPro" id="IPR023944">
    <property type="entry name" value="NorR"/>
</dbReference>
<dbReference type="InterPro" id="IPR027417">
    <property type="entry name" value="P-loop_NTPase"/>
</dbReference>
<dbReference type="InterPro" id="IPR002078">
    <property type="entry name" value="Sigma_54_int"/>
</dbReference>
<dbReference type="InterPro" id="IPR025662">
    <property type="entry name" value="Sigma_54_int_dom_ATP-bd_1"/>
</dbReference>
<dbReference type="InterPro" id="IPR025943">
    <property type="entry name" value="Sigma_54_int_dom_ATP-bd_2"/>
</dbReference>
<dbReference type="InterPro" id="IPR025944">
    <property type="entry name" value="Sigma_54_int_dom_CS"/>
</dbReference>
<dbReference type="NCBIfam" id="NF003451">
    <property type="entry name" value="PRK05022.1"/>
    <property type="match status" value="1"/>
</dbReference>
<dbReference type="PANTHER" id="PTHR32071:SF35">
    <property type="entry name" value="ANAEROBIC NITRIC OXIDE REDUCTASE TRANSCRIPTION REGULATOR NORR"/>
    <property type="match status" value="1"/>
</dbReference>
<dbReference type="PANTHER" id="PTHR32071">
    <property type="entry name" value="TRANSCRIPTIONAL REGULATORY PROTEIN"/>
    <property type="match status" value="1"/>
</dbReference>
<dbReference type="Pfam" id="PF01590">
    <property type="entry name" value="GAF"/>
    <property type="match status" value="1"/>
</dbReference>
<dbReference type="Pfam" id="PF00158">
    <property type="entry name" value="Sigma54_activat"/>
    <property type="match status" value="1"/>
</dbReference>
<dbReference type="SMART" id="SM00382">
    <property type="entry name" value="AAA"/>
    <property type="match status" value="1"/>
</dbReference>
<dbReference type="SMART" id="SM00065">
    <property type="entry name" value="GAF"/>
    <property type="match status" value="1"/>
</dbReference>
<dbReference type="SUPFAM" id="SSF55781">
    <property type="entry name" value="GAF domain-like"/>
    <property type="match status" value="1"/>
</dbReference>
<dbReference type="SUPFAM" id="SSF46689">
    <property type="entry name" value="Homeodomain-like"/>
    <property type="match status" value="1"/>
</dbReference>
<dbReference type="SUPFAM" id="SSF52540">
    <property type="entry name" value="P-loop containing nucleoside triphosphate hydrolases"/>
    <property type="match status" value="1"/>
</dbReference>
<dbReference type="PROSITE" id="PS00675">
    <property type="entry name" value="SIGMA54_INTERACT_1"/>
    <property type="match status" value="1"/>
</dbReference>
<dbReference type="PROSITE" id="PS00676">
    <property type="entry name" value="SIGMA54_INTERACT_2"/>
    <property type="match status" value="1"/>
</dbReference>
<dbReference type="PROSITE" id="PS00688">
    <property type="entry name" value="SIGMA54_INTERACT_3"/>
    <property type="match status" value="1"/>
</dbReference>
<dbReference type="PROSITE" id="PS50045">
    <property type="entry name" value="SIGMA54_INTERACT_4"/>
    <property type="match status" value="1"/>
</dbReference>
<name>NORR_SHIF8</name>
<feature type="chain" id="PRO_0000305626" description="Anaerobic nitric oxide reductase transcription regulator NorR">
    <location>
        <begin position="1"/>
        <end position="504"/>
    </location>
</feature>
<feature type="domain" description="Sigma-54 factor interaction" evidence="1">
    <location>
        <begin position="187"/>
        <end position="416"/>
    </location>
</feature>
<feature type="DNA-binding region" description="H-T-H motif" evidence="1">
    <location>
        <begin position="479"/>
        <end position="498"/>
    </location>
</feature>
<feature type="binding site" evidence="1">
    <location>
        <begin position="215"/>
        <end position="222"/>
    </location>
    <ligand>
        <name>ATP</name>
        <dbReference type="ChEBI" id="CHEBI:30616"/>
    </ligand>
</feature>
<feature type="binding site" evidence="1">
    <location>
        <begin position="278"/>
        <end position="287"/>
    </location>
    <ligand>
        <name>ATP</name>
        <dbReference type="ChEBI" id="CHEBI:30616"/>
    </ligand>
</feature>
<feature type="modified residue" description="4-aspartylphosphate" evidence="1">
    <location>
        <position position="57"/>
    </location>
</feature>
<comment type="function">
    <text evidence="1">Required for the expression of anaerobic nitric oxide (NO) reductase, acts as a transcriptional activator for at least the norVW operon. Activation also requires sigma-54.</text>
</comment>
<comment type="pathway">
    <text evidence="1">Nitrogen metabolism; nitric oxide reduction.</text>
</comment>